<feature type="chain" id="PRO_0000216764" description="Small ribosomal subunit protein cS23">
    <location>
        <begin position="1"/>
        <end position="99"/>
    </location>
</feature>
<accession>P51351</accession>
<organism>
    <name type="scientific">Porphyra purpurea</name>
    <name type="common">Red seaweed</name>
    <name type="synonym">Ulva purpurea</name>
    <dbReference type="NCBI Taxonomy" id="2787"/>
    <lineage>
        <taxon>Eukaryota</taxon>
        <taxon>Rhodophyta</taxon>
        <taxon>Bangiophyceae</taxon>
        <taxon>Bangiales</taxon>
        <taxon>Bangiaceae</taxon>
        <taxon>Porphyra</taxon>
    </lineage>
</organism>
<evidence type="ECO:0000250" key="1"/>
<evidence type="ECO:0000255" key="2">
    <source>
        <dbReference type="HAMAP-Rule" id="MF_00619"/>
    </source>
</evidence>
<evidence type="ECO:0000305" key="3"/>
<reference key="1">
    <citation type="journal article" date="1995" name="Plant Mol. Biol. Rep.">
        <title>Complete nucleotide sequence of the Porphyra purpurea chloroplast genome.</title>
        <authorList>
            <person name="Reith M.E."/>
            <person name="Munholland J."/>
        </authorList>
    </citation>
    <scope>NUCLEOTIDE SEQUENCE [LARGE SCALE GENOMIC DNA]</scope>
    <source>
        <strain>Avonport</strain>
    </source>
</reference>
<comment type="function">
    <text evidence="1">Probably a ribosomal protein or a ribosome-associated protein.</text>
</comment>
<comment type="subunit">
    <text evidence="1">Part of the 30S ribosomal subunit.</text>
</comment>
<comment type="subcellular location">
    <subcellularLocation>
        <location>Plastid</location>
        <location>Chloroplast</location>
    </subcellularLocation>
</comment>
<comment type="similarity">
    <text evidence="3">Belongs to the chloroplast-specific ribosomal protein cS23 family.</text>
</comment>
<name>RRP3_PORPU</name>
<protein>
    <recommendedName>
        <fullName evidence="2">Small ribosomal subunit protein cS23</fullName>
    </recommendedName>
    <alternativeName>
        <fullName>30S ribosomal protein 3, chloroplastic</fullName>
        <shortName>PSRP-3</shortName>
    </alternativeName>
</protein>
<geneLocation type="chloroplast"/>
<proteinExistence type="inferred from homology"/>
<dbReference type="EMBL" id="U38804">
    <property type="protein sequence ID" value="AAC08237.1"/>
    <property type="molecule type" value="Genomic_DNA"/>
</dbReference>
<dbReference type="PIR" id="S73272">
    <property type="entry name" value="S73272"/>
</dbReference>
<dbReference type="RefSeq" id="NP_053961.1">
    <property type="nucleotide sequence ID" value="NC_000925.1"/>
</dbReference>
<dbReference type="SMR" id="P51351"/>
<dbReference type="GeneID" id="809987"/>
<dbReference type="GO" id="GO:0009507">
    <property type="term" value="C:chloroplast"/>
    <property type="evidence" value="ECO:0007669"/>
    <property type="project" value="UniProtKB-SubCell"/>
</dbReference>
<dbReference type="GO" id="GO:1990904">
    <property type="term" value="C:ribonucleoprotein complex"/>
    <property type="evidence" value="ECO:0007669"/>
    <property type="project" value="UniProtKB-KW"/>
</dbReference>
<dbReference type="GO" id="GO:0005840">
    <property type="term" value="C:ribosome"/>
    <property type="evidence" value="ECO:0007669"/>
    <property type="project" value="UniProtKB-KW"/>
</dbReference>
<dbReference type="GO" id="GO:0003735">
    <property type="term" value="F:structural constituent of ribosome"/>
    <property type="evidence" value="ECO:0007669"/>
    <property type="project" value="InterPro"/>
</dbReference>
<dbReference type="GO" id="GO:0006412">
    <property type="term" value="P:translation"/>
    <property type="evidence" value="ECO:0007669"/>
    <property type="project" value="UniProtKB-UniRule"/>
</dbReference>
<dbReference type="Gene3D" id="3.30.390.140">
    <property type="match status" value="1"/>
</dbReference>
<dbReference type="HAMAP" id="MF_00619">
    <property type="entry name" value="Ribosomal_plastid_cS23"/>
    <property type="match status" value="1"/>
</dbReference>
<dbReference type="InterPro" id="IPR038447">
    <property type="entry name" value="PSRP-3/Ycf65_sf"/>
</dbReference>
<dbReference type="InterPro" id="IPR006924">
    <property type="entry name" value="Ribosomal_PSRP3/Ycf65"/>
</dbReference>
<dbReference type="NCBIfam" id="NF002740">
    <property type="entry name" value="PRK02724.1"/>
    <property type="match status" value="1"/>
</dbReference>
<dbReference type="PANTHER" id="PTHR35108">
    <property type="entry name" value="30S RIBOSOMAL PROTEIN 3, CHLOROPLASTIC"/>
    <property type="match status" value="1"/>
</dbReference>
<dbReference type="PANTHER" id="PTHR35108:SF1">
    <property type="entry name" value="OS04G0461100 PROTEIN"/>
    <property type="match status" value="1"/>
</dbReference>
<dbReference type="Pfam" id="PF04839">
    <property type="entry name" value="PSRP-3_Ycf65"/>
    <property type="match status" value="1"/>
</dbReference>
<keyword id="KW-0150">Chloroplast</keyword>
<keyword id="KW-0934">Plastid</keyword>
<keyword id="KW-0687">Ribonucleoprotein</keyword>
<keyword id="KW-0689">Ribosomal protein</keyword>
<gene>
    <name type="primary">ycf65</name>
</gene>
<sequence length="99" mass="11563">MSKFTLKVLWLENNIAIAIDQIVGNGTSPLTSYFFWPRNDAWEELKAELESKPWIAERDRIELLNKTTEVINYWQEEGKKHSLSKAQARFPEFIFSGSN</sequence>